<keyword id="KW-0963">Cytoplasm</keyword>
<keyword id="KW-0274">FAD</keyword>
<keyword id="KW-0285">Flavoprotein</keyword>
<keyword id="KW-0520">NAD</keyword>
<keyword id="KW-0819">tRNA processing</keyword>
<proteinExistence type="inferred from homology"/>
<gene>
    <name evidence="1" type="primary">mnmG</name>
    <name evidence="1" type="synonym">gidA</name>
    <name type="ordered locus">TC_0785</name>
</gene>
<accession>Q9PJP3</accession>
<protein>
    <recommendedName>
        <fullName evidence="1">tRNA uridine 5-carboxymethylaminomethyl modification enzyme MnmG</fullName>
    </recommendedName>
    <alternativeName>
        <fullName evidence="1">Glucose-inhibited division protein A</fullName>
    </alternativeName>
</protein>
<evidence type="ECO:0000255" key="1">
    <source>
        <dbReference type="HAMAP-Rule" id="MF_00129"/>
    </source>
</evidence>
<name>MNMG_CHLMU</name>
<comment type="function">
    <text evidence="1">NAD-binding protein involved in the addition of a carboxymethylaminomethyl (cmnm) group at the wobble position (U34) of certain tRNAs, forming tRNA-cmnm(5)s(2)U34.</text>
</comment>
<comment type="cofactor">
    <cofactor evidence="1">
        <name>FAD</name>
        <dbReference type="ChEBI" id="CHEBI:57692"/>
    </cofactor>
</comment>
<comment type="subunit">
    <text evidence="1">Homodimer. Heterotetramer of two MnmE and two MnmG subunits.</text>
</comment>
<comment type="subcellular location">
    <subcellularLocation>
        <location evidence="1">Cytoplasm</location>
    </subcellularLocation>
</comment>
<comment type="similarity">
    <text evidence="1">Belongs to the MnmG family.</text>
</comment>
<feature type="chain" id="PRO_0000117081" description="tRNA uridine 5-carboxymethylaminomethyl modification enzyme MnmG">
    <location>
        <begin position="1"/>
        <end position="610"/>
    </location>
</feature>
<feature type="binding site" evidence="1">
    <location>
        <begin position="14"/>
        <end position="19"/>
    </location>
    <ligand>
        <name>FAD</name>
        <dbReference type="ChEBI" id="CHEBI:57692"/>
    </ligand>
</feature>
<feature type="binding site" evidence="1">
    <location>
        <begin position="274"/>
        <end position="288"/>
    </location>
    <ligand>
        <name>NAD(+)</name>
        <dbReference type="ChEBI" id="CHEBI:57540"/>
    </ligand>
</feature>
<reference key="1">
    <citation type="journal article" date="2000" name="Nucleic Acids Res.">
        <title>Genome sequences of Chlamydia trachomatis MoPn and Chlamydia pneumoniae AR39.</title>
        <authorList>
            <person name="Read T.D."/>
            <person name="Brunham R.C."/>
            <person name="Shen C."/>
            <person name="Gill S.R."/>
            <person name="Heidelberg J.F."/>
            <person name="White O."/>
            <person name="Hickey E.K."/>
            <person name="Peterson J.D."/>
            <person name="Utterback T.R."/>
            <person name="Berry K.J."/>
            <person name="Bass S."/>
            <person name="Linher K.D."/>
            <person name="Weidman J.F."/>
            <person name="Khouri H.M."/>
            <person name="Craven B."/>
            <person name="Bowman C."/>
            <person name="Dodson R.J."/>
            <person name="Gwinn M.L."/>
            <person name="Nelson W.C."/>
            <person name="DeBoy R.T."/>
            <person name="Kolonay J.F."/>
            <person name="McClarty G."/>
            <person name="Salzberg S.L."/>
            <person name="Eisen J.A."/>
            <person name="Fraser C.M."/>
        </authorList>
    </citation>
    <scope>NUCLEOTIDE SEQUENCE [LARGE SCALE GENOMIC DNA]</scope>
    <source>
        <strain>MoPn / Nigg</strain>
    </source>
</reference>
<dbReference type="EMBL" id="AE002160">
    <property type="protein sequence ID" value="AAF39588.1"/>
    <property type="molecule type" value="Genomic_DNA"/>
</dbReference>
<dbReference type="PIR" id="A81666">
    <property type="entry name" value="A81666"/>
</dbReference>
<dbReference type="RefSeq" id="WP_010231545.1">
    <property type="nucleotide sequence ID" value="NZ_CP063055.1"/>
</dbReference>
<dbReference type="SMR" id="Q9PJP3"/>
<dbReference type="GeneID" id="1246151"/>
<dbReference type="KEGG" id="cmu:TC_0785"/>
<dbReference type="eggNOG" id="COG0445">
    <property type="taxonomic scope" value="Bacteria"/>
</dbReference>
<dbReference type="HOGENOM" id="CLU_007831_2_2_0"/>
<dbReference type="OrthoDB" id="9815560at2"/>
<dbReference type="Proteomes" id="UP000000800">
    <property type="component" value="Chromosome"/>
</dbReference>
<dbReference type="GO" id="GO:0005829">
    <property type="term" value="C:cytosol"/>
    <property type="evidence" value="ECO:0007669"/>
    <property type="project" value="TreeGrafter"/>
</dbReference>
<dbReference type="GO" id="GO:0050660">
    <property type="term" value="F:flavin adenine dinucleotide binding"/>
    <property type="evidence" value="ECO:0007669"/>
    <property type="project" value="UniProtKB-UniRule"/>
</dbReference>
<dbReference type="GO" id="GO:0030488">
    <property type="term" value="P:tRNA methylation"/>
    <property type="evidence" value="ECO:0007669"/>
    <property type="project" value="TreeGrafter"/>
</dbReference>
<dbReference type="GO" id="GO:0002098">
    <property type="term" value="P:tRNA wobble uridine modification"/>
    <property type="evidence" value="ECO:0007669"/>
    <property type="project" value="InterPro"/>
</dbReference>
<dbReference type="FunFam" id="1.10.150.570:FF:000001">
    <property type="entry name" value="tRNA uridine 5-carboxymethylaminomethyl modification enzyme MnmG"/>
    <property type="match status" value="1"/>
</dbReference>
<dbReference type="FunFam" id="3.50.50.60:FF:000002">
    <property type="entry name" value="tRNA uridine 5-carboxymethylaminomethyl modification enzyme MnmG"/>
    <property type="match status" value="1"/>
</dbReference>
<dbReference type="FunFam" id="3.50.50.60:FF:000010">
    <property type="entry name" value="tRNA uridine 5-carboxymethylaminomethyl modification enzyme MnmG"/>
    <property type="match status" value="1"/>
</dbReference>
<dbReference type="Gene3D" id="3.50.50.60">
    <property type="entry name" value="FAD/NAD(P)-binding domain"/>
    <property type="match status" value="2"/>
</dbReference>
<dbReference type="Gene3D" id="1.10.150.570">
    <property type="entry name" value="GidA associated domain, C-terminal subdomain"/>
    <property type="match status" value="1"/>
</dbReference>
<dbReference type="Gene3D" id="1.10.10.1800">
    <property type="entry name" value="tRNA uridine 5-carboxymethylaminomethyl modification enzyme MnmG/GidA"/>
    <property type="match status" value="1"/>
</dbReference>
<dbReference type="HAMAP" id="MF_00129">
    <property type="entry name" value="MnmG_GidA"/>
    <property type="match status" value="1"/>
</dbReference>
<dbReference type="InterPro" id="IPR036188">
    <property type="entry name" value="FAD/NAD-bd_sf"/>
</dbReference>
<dbReference type="InterPro" id="IPR049312">
    <property type="entry name" value="GIDA_C_N"/>
</dbReference>
<dbReference type="InterPro" id="IPR004416">
    <property type="entry name" value="MnmG"/>
</dbReference>
<dbReference type="InterPro" id="IPR002218">
    <property type="entry name" value="MnmG-rel"/>
</dbReference>
<dbReference type="InterPro" id="IPR020595">
    <property type="entry name" value="MnmG-rel_CS"/>
</dbReference>
<dbReference type="InterPro" id="IPR026904">
    <property type="entry name" value="MnmG_C"/>
</dbReference>
<dbReference type="InterPro" id="IPR047001">
    <property type="entry name" value="MnmG_C_subdom"/>
</dbReference>
<dbReference type="InterPro" id="IPR044920">
    <property type="entry name" value="MnmG_C_subdom_sf"/>
</dbReference>
<dbReference type="InterPro" id="IPR040131">
    <property type="entry name" value="MnmG_N"/>
</dbReference>
<dbReference type="NCBIfam" id="TIGR00136">
    <property type="entry name" value="mnmG_gidA"/>
    <property type="match status" value="1"/>
</dbReference>
<dbReference type="PANTHER" id="PTHR11806">
    <property type="entry name" value="GLUCOSE INHIBITED DIVISION PROTEIN A"/>
    <property type="match status" value="1"/>
</dbReference>
<dbReference type="PANTHER" id="PTHR11806:SF0">
    <property type="entry name" value="PROTEIN MTO1 HOMOLOG, MITOCHONDRIAL"/>
    <property type="match status" value="1"/>
</dbReference>
<dbReference type="Pfam" id="PF01134">
    <property type="entry name" value="GIDA"/>
    <property type="match status" value="1"/>
</dbReference>
<dbReference type="Pfam" id="PF21680">
    <property type="entry name" value="GIDA_C_1st"/>
    <property type="match status" value="1"/>
</dbReference>
<dbReference type="Pfam" id="PF13932">
    <property type="entry name" value="SAM_GIDA_C"/>
    <property type="match status" value="1"/>
</dbReference>
<dbReference type="SMART" id="SM01228">
    <property type="entry name" value="GIDA_assoc_3"/>
    <property type="match status" value="1"/>
</dbReference>
<dbReference type="SUPFAM" id="SSF51905">
    <property type="entry name" value="FAD/NAD(P)-binding domain"/>
    <property type="match status" value="1"/>
</dbReference>
<dbReference type="PROSITE" id="PS01280">
    <property type="entry name" value="GIDA_1"/>
    <property type="match status" value="1"/>
</dbReference>
<dbReference type="PROSITE" id="PS01281">
    <property type="entry name" value="GIDA_2"/>
    <property type="match status" value="1"/>
</dbReference>
<organism>
    <name type="scientific">Chlamydia muridarum (strain MoPn / Nigg)</name>
    <dbReference type="NCBI Taxonomy" id="243161"/>
    <lineage>
        <taxon>Bacteria</taxon>
        <taxon>Pseudomonadati</taxon>
        <taxon>Chlamydiota</taxon>
        <taxon>Chlamydiia</taxon>
        <taxon>Chlamydiales</taxon>
        <taxon>Chlamydiaceae</taxon>
        <taxon>Chlamydia/Chlamydophila group</taxon>
        <taxon>Chlamydia</taxon>
    </lineage>
</organism>
<sequence>MWTFPVEYDVIVIGAGHAGCEAAYCAAKMGASVLLLTSNLDTIAKLSCNPAVGGIGKGHIVREIDALGGVMAEVTDLSGIQFRILNQTKGPAVRAPRAQVDKQLYHIHMKQLLEQVPGLHIMQGTAEALLDDGEKVLGVSTKEGWAYSGETVVLSSGTFMRGLIHIGTQNFSGGRLGDAASLGLSKDLKRLGFPLGRLKTGTPARLLSSSIDFSIMEEQPGDQNVCFVHREEAFVPKLPQVSCHITYTTDKTKDLIANNLHRSALYGGRIEGVGPRYCPSIEDKIVKFADKDRHHIFIEPEGLNTREVYVNGLSTSMPFDVQYEIIRSVAGLENAVITRPAYAIEYDYIQGNVILPSLESKILEGLFLCGQINGTTGYEEAAAQGLIAGVNAVNKVLHRPAFIPSRQESYIGVMLDDLTTQVLDEPYRMFTSRAEHRLLLRQDNAGMRLSHYGHALGLLSSERYAMFQKQKNCIEHEKERLAKTFRKYGDSIVPLTKILCRPEVSYQQLLTEFPEDVKDWGPIIGASLEMEIKYSGYISRQQTLIRSMEKAENTLIPEGIDYHSISALSLEAREKLSKFTPRTIGSAARISGISVADIQVLMVSLKKDAY</sequence>